<keyword id="KW-0007">Acetylation</keyword>
<keyword id="KW-0113">Calvin cycle</keyword>
<keyword id="KW-0120">Carbon dioxide fixation</keyword>
<keyword id="KW-0150">Chloroplast</keyword>
<keyword id="KW-1015">Disulfide bond</keyword>
<keyword id="KW-0456">Lyase</keyword>
<keyword id="KW-0460">Magnesium</keyword>
<keyword id="KW-0479">Metal-binding</keyword>
<keyword id="KW-0488">Methylation</keyword>
<keyword id="KW-0503">Monooxygenase</keyword>
<keyword id="KW-0560">Oxidoreductase</keyword>
<keyword id="KW-0601">Photorespiration</keyword>
<keyword id="KW-0602">Photosynthesis</keyword>
<keyword id="KW-0934">Plastid</keyword>
<accession>P24680</accession>
<gene>
    <name evidence="1" type="primary">rbcL</name>
</gene>
<protein>
    <recommendedName>
        <fullName evidence="1">Ribulose bisphosphate carboxylase large chain</fullName>
        <shortName evidence="1">RuBisCO large subunit</shortName>
        <ecNumber evidence="1">4.1.1.39</ecNumber>
    </recommendedName>
</protein>
<proteinExistence type="inferred from homology"/>
<comment type="function">
    <text evidence="1">RuBisCO catalyzes two reactions: the carboxylation of D-ribulose 1,5-bisphosphate, the primary event in carbon dioxide fixation, as well as the oxidative fragmentation of the pentose substrate in the photorespiration process. Both reactions occur simultaneously and in competition at the same active site.</text>
</comment>
<comment type="catalytic activity">
    <reaction evidence="1">
        <text>2 (2R)-3-phosphoglycerate + 2 H(+) = D-ribulose 1,5-bisphosphate + CO2 + H2O</text>
        <dbReference type="Rhea" id="RHEA:23124"/>
        <dbReference type="ChEBI" id="CHEBI:15377"/>
        <dbReference type="ChEBI" id="CHEBI:15378"/>
        <dbReference type="ChEBI" id="CHEBI:16526"/>
        <dbReference type="ChEBI" id="CHEBI:57870"/>
        <dbReference type="ChEBI" id="CHEBI:58272"/>
        <dbReference type="EC" id="4.1.1.39"/>
    </reaction>
</comment>
<comment type="catalytic activity">
    <reaction evidence="1">
        <text>D-ribulose 1,5-bisphosphate + O2 = 2-phosphoglycolate + (2R)-3-phosphoglycerate + 2 H(+)</text>
        <dbReference type="Rhea" id="RHEA:36631"/>
        <dbReference type="ChEBI" id="CHEBI:15378"/>
        <dbReference type="ChEBI" id="CHEBI:15379"/>
        <dbReference type="ChEBI" id="CHEBI:57870"/>
        <dbReference type="ChEBI" id="CHEBI:58033"/>
        <dbReference type="ChEBI" id="CHEBI:58272"/>
    </reaction>
</comment>
<comment type="cofactor">
    <cofactor evidence="1">
        <name>Mg(2+)</name>
        <dbReference type="ChEBI" id="CHEBI:18420"/>
    </cofactor>
    <text evidence="1">Binds 1 Mg(2+) ion per subunit.</text>
</comment>
<comment type="subunit">
    <text evidence="1">Heterohexadecamer of 8 large chains and 8 small chains; disulfide-linked. The disulfide link is formed within the large subunit homodimers.</text>
</comment>
<comment type="subcellular location">
    <subcellularLocation>
        <location>Plastid</location>
        <location>Chloroplast</location>
    </subcellularLocation>
</comment>
<comment type="PTM">
    <text evidence="1">The disulfide bond which can form in the large chain dimeric partners within the hexadecamer appears to be associated with oxidative stress and protein turnover.</text>
</comment>
<comment type="miscellaneous">
    <text evidence="1">The basic functional RuBisCO is composed of a large chain homodimer in a 'head-to-tail' conformation. In form I RuBisCO this homodimer is arranged in a barrel-like tetramer with the small subunits forming a tetrameric 'cap' on each end of the 'barrel'.</text>
</comment>
<comment type="similarity">
    <text evidence="1">Belongs to the RuBisCO large chain family. Type I subfamily.</text>
</comment>
<geneLocation type="chloroplast"/>
<name>RBL_AFRGR</name>
<organism>
    <name type="scientific">Afrocarpus gracilior</name>
    <name type="common">African fern pine</name>
    <name type="synonym">Podocarpus gracilior</name>
    <dbReference type="NCBI Taxonomy" id="56897"/>
    <lineage>
        <taxon>Eukaryota</taxon>
        <taxon>Viridiplantae</taxon>
        <taxon>Streptophyta</taxon>
        <taxon>Embryophyta</taxon>
        <taxon>Tracheophyta</taxon>
        <taxon>Spermatophyta</taxon>
        <taxon>Pinopsida</taxon>
        <taxon>Pinidae</taxon>
        <taxon>Conifers II</taxon>
        <taxon>Araucariales</taxon>
        <taxon>Podocarpaceae</taxon>
        <taxon>Afrocarpus</taxon>
    </lineage>
</organism>
<dbReference type="EC" id="4.1.1.39" evidence="1"/>
<dbReference type="EMBL" id="X58135">
    <property type="protein sequence ID" value="CAA41143.1"/>
    <property type="status" value="ALT_SEQ"/>
    <property type="molecule type" value="Genomic_DNA"/>
</dbReference>
<dbReference type="PIR" id="G46161">
    <property type="entry name" value="RKSZLA"/>
</dbReference>
<dbReference type="SMR" id="P24680"/>
<dbReference type="GO" id="GO:0009507">
    <property type="term" value="C:chloroplast"/>
    <property type="evidence" value="ECO:0007669"/>
    <property type="project" value="UniProtKB-SubCell"/>
</dbReference>
<dbReference type="GO" id="GO:0000287">
    <property type="term" value="F:magnesium ion binding"/>
    <property type="evidence" value="ECO:0007669"/>
    <property type="project" value="UniProtKB-UniRule"/>
</dbReference>
<dbReference type="GO" id="GO:0004497">
    <property type="term" value="F:monooxygenase activity"/>
    <property type="evidence" value="ECO:0007669"/>
    <property type="project" value="UniProtKB-KW"/>
</dbReference>
<dbReference type="GO" id="GO:0016984">
    <property type="term" value="F:ribulose-bisphosphate carboxylase activity"/>
    <property type="evidence" value="ECO:0007669"/>
    <property type="project" value="UniProtKB-UniRule"/>
</dbReference>
<dbReference type="GO" id="GO:0009853">
    <property type="term" value="P:photorespiration"/>
    <property type="evidence" value="ECO:0007669"/>
    <property type="project" value="UniProtKB-KW"/>
</dbReference>
<dbReference type="GO" id="GO:0019253">
    <property type="term" value="P:reductive pentose-phosphate cycle"/>
    <property type="evidence" value="ECO:0007669"/>
    <property type="project" value="UniProtKB-UniRule"/>
</dbReference>
<dbReference type="CDD" id="cd08212">
    <property type="entry name" value="RuBisCO_large_I"/>
    <property type="match status" value="1"/>
</dbReference>
<dbReference type="FunFam" id="3.20.20.110:FF:000001">
    <property type="entry name" value="Ribulose bisphosphate carboxylase large chain"/>
    <property type="match status" value="1"/>
</dbReference>
<dbReference type="FunFam" id="3.30.70.150:FF:000001">
    <property type="entry name" value="Ribulose bisphosphate carboxylase large chain"/>
    <property type="match status" value="1"/>
</dbReference>
<dbReference type="Gene3D" id="3.20.20.110">
    <property type="entry name" value="Ribulose bisphosphate carboxylase, large subunit, C-terminal domain"/>
    <property type="match status" value="1"/>
</dbReference>
<dbReference type="Gene3D" id="3.30.70.150">
    <property type="entry name" value="RuBisCO large subunit, N-terminal domain"/>
    <property type="match status" value="1"/>
</dbReference>
<dbReference type="HAMAP" id="MF_01338">
    <property type="entry name" value="RuBisCO_L_type1"/>
    <property type="match status" value="1"/>
</dbReference>
<dbReference type="InterPro" id="IPR033966">
    <property type="entry name" value="RuBisCO"/>
</dbReference>
<dbReference type="InterPro" id="IPR020878">
    <property type="entry name" value="RuBisCo_large_chain_AS"/>
</dbReference>
<dbReference type="InterPro" id="IPR000685">
    <property type="entry name" value="RuBisCO_lsu_C"/>
</dbReference>
<dbReference type="InterPro" id="IPR036376">
    <property type="entry name" value="RuBisCO_lsu_C_sf"/>
</dbReference>
<dbReference type="InterPro" id="IPR017443">
    <property type="entry name" value="RuBisCO_lsu_fd_N"/>
</dbReference>
<dbReference type="InterPro" id="IPR036422">
    <property type="entry name" value="RuBisCO_lsu_N_sf"/>
</dbReference>
<dbReference type="InterPro" id="IPR020888">
    <property type="entry name" value="RuBisCO_lsuI"/>
</dbReference>
<dbReference type="NCBIfam" id="NF003252">
    <property type="entry name" value="PRK04208.1"/>
    <property type="match status" value="1"/>
</dbReference>
<dbReference type="PANTHER" id="PTHR42704">
    <property type="entry name" value="RIBULOSE BISPHOSPHATE CARBOXYLASE"/>
    <property type="match status" value="1"/>
</dbReference>
<dbReference type="PANTHER" id="PTHR42704:SF15">
    <property type="entry name" value="RIBULOSE BISPHOSPHATE CARBOXYLASE LARGE CHAIN"/>
    <property type="match status" value="1"/>
</dbReference>
<dbReference type="Pfam" id="PF00016">
    <property type="entry name" value="RuBisCO_large"/>
    <property type="match status" value="1"/>
</dbReference>
<dbReference type="Pfam" id="PF02788">
    <property type="entry name" value="RuBisCO_large_N"/>
    <property type="match status" value="1"/>
</dbReference>
<dbReference type="SFLD" id="SFLDG01052">
    <property type="entry name" value="RuBisCO"/>
    <property type="match status" value="1"/>
</dbReference>
<dbReference type="SFLD" id="SFLDS00014">
    <property type="entry name" value="RuBisCO"/>
    <property type="match status" value="1"/>
</dbReference>
<dbReference type="SFLD" id="SFLDG00301">
    <property type="entry name" value="RuBisCO-like_proteins"/>
    <property type="match status" value="1"/>
</dbReference>
<dbReference type="SUPFAM" id="SSF51649">
    <property type="entry name" value="RuBisCo, C-terminal domain"/>
    <property type="match status" value="1"/>
</dbReference>
<dbReference type="SUPFAM" id="SSF54966">
    <property type="entry name" value="RuBisCO, large subunit, small (N-terminal) domain"/>
    <property type="match status" value="1"/>
</dbReference>
<dbReference type="PROSITE" id="PS00157">
    <property type="entry name" value="RUBISCO_LARGE"/>
    <property type="match status" value="1"/>
</dbReference>
<evidence type="ECO:0000255" key="1">
    <source>
        <dbReference type="HAMAP-Rule" id="MF_01338"/>
    </source>
</evidence>
<evidence type="ECO:0000305" key="2"/>
<feature type="propeptide" id="PRO_0000031373" evidence="1">
    <location>
        <begin position="1"/>
        <end position="2"/>
    </location>
</feature>
<feature type="chain" id="PRO_0000031374" description="Ribulose bisphosphate carboxylase large chain">
    <location>
        <begin position="3"/>
        <end position="475"/>
    </location>
</feature>
<feature type="active site" description="Proton acceptor" evidence="1">
    <location>
        <position position="175"/>
    </location>
</feature>
<feature type="active site" description="Proton acceptor" evidence="1">
    <location>
        <position position="294"/>
    </location>
</feature>
<feature type="binding site" description="in homodimeric partner" evidence="1">
    <location>
        <position position="123"/>
    </location>
    <ligand>
        <name>substrate</name>
    </ligand>
</feature>
<feature type="binding site" evidence="1">
    <location>
        <position position="173"/>
    </location>
    <ligand>
        <name>substrate</name>
    </ligand>
</feature>
<feature type="binding site" evidence="1">
    <location>
        <position position="177"/>
    </location>
    <ligand>
        <name>substrate</name>
    </ligand>
</feature>
<feature type="binding site" description="via carbamate group" evidence="1">
    <location>
        <position position="201"/>
    </location>
    <ligand>
        <name>Mg(2+)</name>
        <dbReference type="ChEBI" id="CHEBI:18420"/>
    </ligand>
</feature>
<feature type="binding site" evidence="1">
    <location>
        <position position="203"/>
    </location>
    <ligand>
        <name>Mg(2+)</name>
        <dbReference type="ChEBI" id="CHEBI:18420"/>
    </ligand>
</feature>
<feature type="binding site" evidence="1">
    <location>
        <position position="204"/>
    </location>
    <ligand>
        <name>Mg(2+)</name>
        <dbReference type="ChEBI" id="CHEBI:18420"/>
    </ligand>
</feature>
<feature type="binding site" evidence="1">
    <location>
        <position position="295"/>
    </location>
    <ligand>
        <name>substrate</name>
    </ligand>
</feature>
<feature type="binding site" evidence="1">
    <location>
        <position position="327"/>
    </location>
    <ligand>
        <name>substrate</name>
    </ligand>
</feature>
<feature type="binding site" evidence="1">
    <location>
        <position position="379"/>
    </location>
    <ligand>
        <name>substrate</name>
    </ligand>
</feature>
<feature type="site" description="Transition state stabilizer" evidence="1">
    <location>
        <position position="334"/>
    </location>
</feature>
<feature type="modified residue" description="N-acetylproline" evidence="1">
    <location>
        <position position="3"/>
    </location>
</feature>
<feature type="modified residue" description="N6,N6,N6-trimethyllysine" evidence="1">
    <location>
        <position position="14"/>
    </location>
</feature>
<feature type="modified residue" description="N6-carboxylysine" evidence="1">
    <location>
        <position position="201"/>
    </location>
</feature>
<feature type="disulfide bond" description="Interchain; in linked form" evidence="1">
    <location>
        <position position="247"/>
    </location>
</feature>
<feature type="sequence conflict" description="In Ref. 1; CAA41143." evidence="2" ref="1">
    <original>V</original>
    <variation>A</variation>
    <location>
        <position position="11"/>
    </location>
</feature>
<feature type="sequence conflict" description="In Ref. 1; CAA41143." evidence="2" ref="1">
    <original>Q</original>
    <variation>P</variation>
    <location>
        <position position="30"/>
    </location>
</feature>
<reference key="1">
    <citation type="submission" date="1991-03" db="EMBL/GenBank/DDBJ databases">
        <authorList>
            <person name="Doerksen A.H."/>
            <person name="Strauss S."/>
            <person name="Price R."/>
        </authorList>
    </citation>
    <scope>NUCLEOTIDE SEQUENCE [GENOMIC DNA]</scope>
</reference>
<sequence>MSPKTETKASVGFKAGVKDYRLTYYTPEYQTKDTDILAAFRVTPQPGVPPEEAGAAVAAESSTGTWTTVWTDGLTSLDRYKGRCYDIEPVPGEENQYIVYVAYPLDLFEEGSVTNLFTSIVGNVFGFKALRALRLEDLRIPPAYSKTFQGPPHGIQVERDKLNKYGRPLLGCTIKPKLGLSAKNYGRAVYECLRGGLDFTKDDENVNSQPFMRWRDRFCFCAEALFKAQAETGEIKGHYLNATAGTCEEMMKRAVFARELGVPIVMHDYLTGGFTANTSLAHYCRDNGLLLHIHRAMHAVIDRQKNHGMHFRVLAKALRMSGGDHIHAGTVVGKLEGEREVTLGFVDLLRDDFIEKDRSRGIYFTQDWVSMPGVIPVASGGIHVWHMPALTEIFGDDSVLQFGGGTLGHPWGNAPGAVANRVALEACVEARNEGRDLAREGNEVIREASKWSPELAAACEVWKEIIFEFETIDTL</sequence>